<dbReference type="EMBL" id="U12133">
    <property type="protein sequence ID" value="AAA21279.1"/>
    <property type="molecule type" value="mRNA"/>
</dbReference>
<dbReference type="PIR" id="T07852">
    <property type="entry name" value="T07852"/>
</dbReference>
<dbReference type="RefSeq" id="NP_001412459.1">
    <property type="nucleotide sequence ID" value="NM_001425530.1"/>
</dbReference>
<dbReference type="RefSeq" id="XP_013657438.1">
    <property type="nucleotide sequence ID" value="XM_013801984.1"/>
</dbReference>
<dbReference type="RefSeq" id="XP_013657441.1">
    <property type="nucleotide sequence ID" value="XM_013801987.1"/>
</dbReference>
<dbReference type="RefSeq" id="XP_013662134.1">
    <property type="nucleotide sequence ID" value="XM_013806680.3"/>
</dbReference>
<dbReference type="RefSeq" id="XP_013681241.1">
    <property type="nucleotide sequence ID" value="XM_013825787.1"/>
</dbReference>
<dbReference type="RefSeq" id="XP_013695342.1">
    <property type="nucleotide sequence ID" value="XM_013839888.1"/>
</dbReference>
<dbReference type="RefSeq" id="XP_013695359.1">
    <property type="nucleotide sequence ID" value="XM_013839905.3"/>
</dbReference>
<dbReference type="RefSeq" id="XP_013746286.1">
    <property type="nucleotide sequence ID" value="XM_013890832.1"/>
</dbReference>
<dbReference type="RefSeq" id="XP_013749273.1">
    <property type="nucleotide sequence ID" value="XM_013893819.1"/>
</dbReference>
<dbReference type="RefSeq" id="XP_048638134.1">
    <property type="nucleotide sequence ID" value="XM_048782177.1"/>
</dbReference>
<dbReference type="SMR" id="Q39290"/>
<dbReference type="EnsemblPlants" id="CDX97962">
    <property type="protein sequence ID" value="CDX97962"/>
    <property type="gene ID" value="GSBRNA2T00105315001"/>
</dbReference>
<dbReference type="EnsemblPlants" id="CDY20998">
    <property type="protein sequence ID" value="CDY20998"/>
    <property type="gene ID" value="GSBRNA2T00015154001"/>
</dbReference>
<dbReference type="EnsemblPlants" id="CDY49783">
    <property type="protein sequence ID" value="CDY49783"/>
    <property type="gene ID" value="GSBRNA2T00093803001"/>
</dbReference>
<dbReference type="EnsemblPlants" id="CDY57040">
    <property type="protein sequence ID" value="CDY57040"/>
    <property type="gene ID" value="GSBRNA2T00020444001"/>
</dbReference>
<dbReference type="GeneID" id="106362151"/>
<dbReference type="GeneID" id="106366999"/>
<dbReference type="GeneID" id="106399422"/>
<dbReference type="GeneID" id="106449027"/>
<dbReference type="Gramene" id="CDX97962">
    <property type="protein sequence ID" value="CDX97962"/>
    <property type="gene ID" value="GSBRNA2T00105315001"/>
</dbReference>
<dbReference type="Gramene" id="CDY20998">
    <property type="protein sequence ID" value="CDY20998"/>
    <property type="gene ID" value="GSBRNA2T00015154001"/>
</dbReference>
<dbReference type="Gramene" id="CDY49783">
    <property type="protein sequence ID" value="CDY49783"/>
    <property type="gene ID" value="GSBRNA2T00093803001"/>
</dbReference>
<dbReference type="Gramene" id="CDY57040">
    <property type="protein sequence ID" value="CDY57040"/>
    <property type="gene ID" value="GSBRNA2T00020444001"/>
</dbReference>
<dbReference type="KEGG" id="bna:106362151"/>
<dbReference type="KEGG" id="bna:106366999"/>
<dbReference type="KEGG" id="bna:106399422"/>
<dbReference type="OMA" id="TVGNTWE"/>
<dbReference type="OrthoDB" id="1021546at2759"/>
<dbReference type="GO" id="GO:0005665">
    <property type="term" value="C:RNA polymerase II, core complex"/>
    <property type="evidence" value="ECO:0007669"/>
    <property type="project" value="UniProtKB-ARBA"/>
</dbReference>
<dbReference type="GO" id="GO:0003677">
    <property type="term" value="F:DNA binding"/>
    <property type="evidence" value="ECO:0007669"/>
    <property type="project" value="InterPro"/>
</dbReference>
<dbReference type="GO" id="GO:0003899">
    <property type="term" value="F:DNA-directed RNA polymerase activity"/>
    <property type="evidence" value="ECO:0007669"/>
    <property type="project" value="InterPro"/>
</dbReference>
<dbReference type="GO" id="GO:0008270">
    <property type="term" value="F:zinc ion binding"/>
    <property type="evidence" value="ECO:0007669"/>
    <property type="project" value="InterPro"/>
</dbReference>
<dbReference type="GO" id="GO:0006351">
    <property type="term" value="P:DNA-templated transcription"/>
    <property type="evidence" value="ECO:0007669"/>
    <property type="project" value="InterPro"/>
</dbReference>
<dbReference type="FunFam" id="1.10.10.60:FF:000024">
    <property type="entry name" value="DNA-directed RNA polymerases I, II, and III subunit"/>
    <property type="match status" value="1"/>
</dbReference>
<dbReference type="Gene3D" id="1.10.10.60">
    <property type="entry name" value="Homeodomain-like"/>
    <property type="match status" value="1"/>
</dbReference>
<dbReference type="InterPro" id="IPR023580">
    <property type="entry name" value="RNA_pol_su_RPB10"/>
</dbReference>
<dbReference type="InterPro" id="IPR020789">
    <property type="entry name" value="RNA_pol_suN_Zn-BS"/>
</dbReference>
<dbReference type="InterPro" id="IPR000268">
    <property type="entry name" value="RPABC5/Rpb10"/>
</dbReference>
<dbReference type="NCBIfam" id="NF003089">
    <property type="entry name" value="PRK04016.1"/>
    <property type="match status" value="1"/>
</dbReference>
<dbReference type="PANTHER" id="PTHR23431">
    <property type="entry name" value="DNA-DIRECTED RNA POLYMERASES I, II, AND III SUBUNIT RPABC5 FAMILY MEMBER"/>
    <property type="match status" value="1"/>
</dbReference>
<dbReference type="PANTHER" id="PTHR23431:SF5">
    <property type="entry name" value="DNA-DIRECTED RNA POLYMERASES II, IV AND V SUBUNIT 10"/>
    <property type="match status" value="1"/>
</dbReference>
<dbReference type="Pfam" id="PF01194">
    <property type="entry name" value="RNA_pol_N"/>
    <property type="match status" value="1"/>
</dbReference>
<dbReference type="PIRSF" id="PIRSF005653">
    <property type="entry name" value="RNA_pol_N/8_sub"/>
    <property type="match status" value="1"/>
</dbReference>
<dbReference type="SUPFAM" id="SSF46924">
    <property type="entry name" value="RNA polymerase subunit RPB10"/>
    <property type="match status" value="1"/>
</dbReference>
<dbReference type="PROSITE" id="PS01112">
    <property type="entry name" value="RNA_POL_N_8KD"/>
    <property type="match status" value="1"/>
</dbReference>
<proteinExistence type="inferred from homology"/>
<keyword id="KW-0240">DNA-directed RNA polymerase</keyword>
<keyword id="KW-0479">Metal-binding</keyword>
<keyword id="KW-0539">Nucleus</keyword>
<keyword id="KW-0804">Transcription</keyword>
<keyword id="KW-0862">Zinc</keyword>
<reference key="1">
    <citation type="journal article" date="1996" name="Mol. Cells">
        <title>Identification of a Brassica napus cDNA clone encoding a peptide highly related to ABC10, the smallest and common subunit of RNA polymerases of Saccharomyces cerevisiae.</title>
        <authorList>
            <person name="Nam H.G."/>
            <person name="Kwak J.M."/>
            <person name="Hong S.W."/>
            <person name="Kim S.A."/>
        </authorList>
    </citation>
    <scope>NUCLEOTIDE SEQUENCE [MRNA]</scope>
    <source>
        <strain>cv. Naehan</strain>
        <tissue>Root</tissue>
    </source>
</reference>
<accession>Q39290</accession>
<organism>
    <name type="scientific">Brassica napus</name>
    <name type="common">Rape</name>
    <dbReference type="NCBI Taxonomy" id="3708"/>
    <lineage>
        <taxon>Eukaryota</taxon>
        <taxon>Viridiplantae</taxon>
        <taxon>Streptophyta</taxon>
        <taxon>Embryophyta</taxon>
        <taxon>Tracheophyta</taxon>
        <taxon>Spermatophyta</taxon>
        <taxon>Magnoliopsida</taxon>
        <taxon>eudicotyledons</taxon>
        <taxon>Gunneridae</taxon>
        <taxon>Pentapetalae</taxon>
        <taxon>rosids</taxon>
        <taxon>malvids</taxon>
        <taxon>Brassicales</taxon>
        <taxon>Brassicaceae</taxon>
        <taxon>Brassiceae</taxon>
        <taxon>Brassica</taxon>
    </lineage>
</organism>
<name>RPAB5_BRANA</name>
<protein>
    <recommendedName>
        <fullName>DNA-directed RNA polymerases I, II, and III subunit RPABC5</fullName>
        <shortName>RNA polymerases I, II, and III subunit ABC5</shortName>
    </recommendedName>
    <alternativeName>
        <fullName>ABC10</fullName>
    </alternativeName>
    <alternativeName>
        <fullName>DNA-directed RNA polymerase III subunit L</fullName>
    </alternativeName>
    <alternativeName>
        <fullName>RPB10 homolog</fullName>
    </alternativeName>
</protein>
<sequence length="71" mass="8244">MIIPVRCFTCGKVIGNKWDAYLDLLQLDYTEGDALDALNLVRYCCRRMLMTHVDLIEKLLNYNTLEKSDNS</sequence>
<evidence type="ECO:0000250" key="1"/>
<evidence type="ECO:0000305" key="2"/>
<feature type="chain" id="PRO_0000121338" description="DNA-directed RNA polymerases I, II, and III subunit RPABC5">
    <location>
        <begin position="1"/>
        <end position="71"/>
    </location>
</feature>
<feature type="binding site" evidence="1">
    <location>
        <position position="7"/>
    </location>
    <ligand>
        <name>Zn(2+)</name>
        <dbReference type="ChEBI" id="CHEBI:29105"/>
    </ligand>
</feature>
<feature type="binding site" evidence="1">
    <location>
        <position position="10"/>
    </location>
    <ligand>
        <name>Zn(2+)</name>
        <dbReference type="ChEBI" id="CHEBI:29105"/>
    </ligand>
</feature>
<feature type="binding site" evidence="1">
    <location>
        <position position="44"/>
    </location>
    <ligand>
        <name>Zn(2+)</name>
        <dbReference type="ChEBI" id="CHEBI:29105"/>
    </ligand>
</feature>
<feature type="binding site" evidence="1">
    <location>
        <position position="45"/>
    </location>
    <ligand>
        <name>Zn(2+)</name>
        <dbReference type="ChEBI" id="CHEBI:29105"/>
    </ligand>
</feature>
<comment type="function">
    <text evidence="1">DNA-dependent RNA polymerase catalyzes the transcription of DNA into RNA using the four ribonucleoside triphosphates as substrates. Common component of RNA polymerases I, II and III which synthesize ribosomal RNA precursors, mRNA precursors and many functional non-coding RNAs, and a small RNAs, such as 5S rRNA and tRNAs, respectively. Pol II is the central component of the basal RNA polymerase II transcription machinery. Pols are composed of mobile elements that move relative to each other. In Pol II, RBP10 is part of the core element with the central large cleft (By similarity).</text>
</comment>
<comment type="subunit">
    <text evidence="1">Component of the RNA polymerase I (Pol I), RNA polymerase II (Pol II) and RNA polymerase III (Pol III) complexes consisting of at least 13, 12 and 17 subunits, respectively.</text>
</comment>
<comment type="subcellular location">
    <subcellularLocation>
        <location evidence="1">Nucleus</location>
    </subcellularLocation>
</comment>
<comment type="similarity">
    <text evidence="2">Belongs to the archaeal Rpo10/eukaryotic RPB10 RNA polymerase subunit family.</text>
</comment>